<evidence type="ECO:0000255" key="1"/>
<evidence type="ECO:0000305" key="2"/>
<name>Y273_SYNY3</name>
<comment type="subcellular location">
    <subcellularLocation>
        <location evidence="2">Cell membrane</location>
        <topology evidence="2">Multi-pass membrane protein</topology>
    </subcellularLocation>
</comment>
<feature type="chain" id="PRO_0000157868" description="Uncharacterized protein slr0273">
    <location>
        <begin position="1"/>
        <end position="316"/>
    </location>
</feature>
<feature type="transmembrane region" description="Helical" evidence="1">
    <location>
        <begin position="74"/>
        <end position="94"/>
    </location>
</feature>
<feature type="transmembrane region" description="Helical" evidence="1">
    <location>
        <begin position="99"/>
        <end position="119"/>
    </location>
</feature>
<feature type="transmembrane region" description="Helical" evidence="1">
    <location>
        <begin position="166"/>
        <end position="186"/>
    </location>
</feature>
<feature type="transmembrane region" description="Helical" evidence="1">
    <location>
        <begin position="188"/>
        <end position="208"/>
    </location>
</feature>
<keyword id="KW-1003">Cell membrane</keyword>
<keyword id="KW-0472">Membrane</keyword>
<keyword id="KW-1185">Reference proteome</keyword>
<keyword id="KW-0812">Transmembrane</keyword>
<keyword id="KW-1133">Transmembrane helix</keyword>
<proteinExistence type="predicted"/>
<protein>
    <recommendedName>
        <fullName>Uncharacterized protein slr0273</fullName>
    </recommendedName>
</protein>
<dbReference type="EMBL" id="BA000022">
    <property type="protein sequence ID" value="BAA17958.1"/>
    <property type="molecule type" value="Genomic_DNA"/>
</dbReference>
<dbReference type="PIR" id="S75096">
    <property type="entry name" value="S75096"/>
</dbReference>
<dbReference type="STRING" id="1148.gene:10498827"/>
<dbReference type="PaxDb" id="1148-1653041"/>
<dbReference type="EnsemblBacteria" id="BAA17958">
    <property type="protein sequence ID" value="BAA17958"/>
    <property type="gene ID" value="BAA17958"/>
</dbReference>
<dbReference type="KEGG" id="syn:slr0273"/>
<dbReference type="eggNOG" id="ENOG50344UZ">
    <property type="taxonomic scope" value="Bacteria"/>
</dbReference>
<dbReference type="InParanoid" id="P73894"/>
<dbReference type="Proteomes" id="UP000001425">
    <property type="component" value="Chromosome"/>
</dbReference>
<dbReference type="GO" id="GO:0005886">
    <property type="term" value="C:plasma membrane"/>
    <property type="evidence" value="ECO:0007669"/>
    <property type="project" value="UniProtKB-SubCell"/>
</dbReference>
<dbReference type="InterPro" id="IPR049195">
    <property type="entry name" value="Tre1-like_N"/>
</dbReference>
<dbReference type="Pfam" id="PF21724">
    <property type="entry name" value="DUF6861"/>
    <property type="match status" value="1"/>
</dbReference>
<accession>P73894</accession>
<organism>
    <name type="scientific">Synechocystis sp. (strain ATCC 27184 / PCC 6803 / Kazusa)</name>
    <dbReference type="NCBI Taxonomy" id="1111708"/>
    <lineage>
        <taxon>Bacteria</taxon>
        <taxon>Bacillati</taxon>
        <taxon>Cyanobacteriota</taxon>
        <taxon>Cyanophyceae</taxon>
        <taxon>Synechococcales</taxon>
        <taxon>Merismopediaceae</taxon>
        <taxon>Synechocystis</taxon>
    </lineage>
</organism>
<gene>
    <name type="ordered locus">slr0273</name>
</gene>
<reference key="1">
    <citation type="journal article" date="1996" name="DNA Res.">
        <title>Sequence analysis of the genome of the unicellular cyanobacterium Synechocystis sp. strain PCC6803. II. Sequence determination of the entire genome and assignment of potential protein-coding regions.</title>
        <authorList>
            <person name="Kaneko T."/>
            <person name="Sato S."/>
            <person name="Kotani H."/>
            <person name="Tanaka A."/>
            <person name="Asamizu E."/>
            <person name="Nakamura Y."/>
            <person name="Miyajima N."/>
            <person name="Hirosawa M."/>
            <person name="Sugiura M."/>
            <person name="Sasamoto S."/>
            <person name="Kimura T."/>
            <person name="Hosouchi T."/>
            <person name="Matsuno A."/>
            <person name="Muraki A."/>
            <person name="Nakazaki N."/>
            <person name="Naruo K."/>
            <person name="Okumura S."/>
            <person name="Shimpo S."/>
            <person name="Takeuchi C."/>
            <person name="Wada T."/>
            <person name="Watanabe A."/>
            <person name="Yamada M."/>
            <person name="Yasuda M."/>
            <person name="Tabata S."/>
        </authorList>
    </citation>
    <scope>NUCLEOTIDE SEQUENCE [LARGE SCALE GENOMIC DNA]</scope>
    <source>
        <strain>ATCC 27184 / PCC 6803 / Kazusa</strain>
    </source>
</reference>
<sequence>MPKNMSPICPVCGQENDAANRYCSFCGTRFNSSLPSMDLFQAQTVQAPAPEQMVFSGNGQDLPSLTNHPFWGAIPVLGLLTVLPLGLFIFGMAIDANDWPYAALLVFLLFLFTLLIFLGQLWGNVSQAREFILSERPLILWRYSPDEWQQLRQAQFSESAEDMQEMAGCAVPFFAGVGTLLGTVLGSVEGFVGAVPGAAIGAMAGYIFGKILVPIATGLNQSTNRELYRTDLPVWVVLAPGEIYYNRQYFRADTIGDRLEGITLDEGALTWLRIETFAPRGSITASFDGNILVPHRMLATVKAVLPQLQQFISGED</sequence>